<evidence type="ECO:0000255" key="1">
    <source>
        <dbReference type="HAMAP-Rule" id="MF_00328"/>
    </source>
</evidence>
<name>KGUA_STAHJ</name>
<protein>
    <recommendedName>
        <fullName evidence="1">Guanylate kinase</fullName>
        <ecNumber evidence="1">2.7.4.8</ecNumber>
    </recommendedName>
    <alternativeName>
        <fullName evidence="1">GMP kinase</fullName>
    </alternativeName>
</protein>
<sequence>MDNEKGLLIVLSGPSGVGKGTVRKEIFDDPTTSYKYSVSMTTRNMREGEVDGVDYFFKTKEEFEALIQEDQFIEYAEYVGNYYGTPVQYVKDTMAAGHDVFLEIEVEGAKQVRKKFPDALFIFLAPPSLDHLKERLVGRGTESDEKIQSRVNEARKEVEMMNLYDYVVVNDEVHLAKERIQSIVEAEHLKRERVEAIYRKMLLEAKK</sequence>
<gene>
    <name evidence="1" type="primary">gmk</name>
    <name type="ordered locus">SH1705</name>
</gene>
<feature type="chain" id="PRO_0000266410" description="Guanylate kinase">
    <location>
        <begin position="1"/>
        <end position="207"/>
    </location>
</feature>
<feature type="domain" description="Guanylate kinase-like" evidence="1">
    <location>
        <begin position="6"/>
        <end position="185"/>
    </location>
</feature>
<feature type="binding site" evidence="1">
    <location>
        <begin position="13"/>
        <end position="20"/>
    </location>
    <ligand>
        <name>ATP</name>
        <dbReference type="ChEBI" id="CHEBI:30616"/>
    </ligand>
</feature>
<dbReference type="EC" id="2.7.4.8" evidence="1"/>
<dbReference type="EMBL" id="AP006716">
    <property type="protein sequence ID" value="BAE05014.1"/>
    <property type="molecule type" value="Genomic_DNA"/>
</dbReference>
<dbReference type="RefSeq" id="WP_011275990.1">
    <property type="nucleotide sequence ID" value="NC_007168.1"/>
</dbReference>
<dbReference type="SMR" id="Q4L5R1"/>
<dbReference type="KEGG" id="sha:SH1705"/>
<dbReference type="eggNOG" id="COG0194">
    <property type="taxonomic scope" value="Bacteria"/>
</dbReference>
<dbReference type="HOGENOM" id="CLU_001715_1_2_9"/>
<dbReference type="OrthoDB" id="9808150at2"/>
<dbReference type="Proteomes" id="UP000000543">
    <property type="component" value="Chromosome"/>
</dbReference>
<dbReference type="GO" id="GO:0005829">
    <property type="term" value="C:cytosol"/>
    <property type="evidence" value="ECO:0007669"/>
    <property type="project" value="TreeGrafter"/>
</dbReference>
<dbReference type="GO" id="GO:0005524">
    <property type="term" value="F:ATP binding"/>
    <property type="evidence" value="ECO:0007669"/>
    <property type="project" value="UniProtKB-UniRule"/>
</dbReference>
<dbReference type="GO" id="GO:0004385">
    <property type="term" value="F:guanylate kinase activity"/>
    <property type="evidence" value="ECO:0007669"/>
    <property type="project" value="UniProtKB-UniRule"/>
</dbReference>
<dbReference type="CDD" id="cd00071">
    <property type="entry name" value="GMPK"/>
    <property type="match status" value="1"/>
</dbReference>
<dbReference type="FunFam" id="3.40.50.300:FF:000855">
    <property type="entry name" value="Guanylate kinase"/>
    <property type="match status" value="1"/>
</dbReference>
<dbReference type="FunFam" id="3.30.63.10:FF:000002">
    <property type="entry name" value="Guanylate kinase 1"/>
    <property type="match status" value="1"/>
</dbReference>
<dbReference type="Gene3D" id="3.30.63.10">
    <property type="entry name" value="Guanylate Kinase phosphate binding domain"/>
    <property type="match status" value="1"/>
</dbReference>
<dbReference type="Gene3D" id="3.40.50.300">
    <property type="entry name" value="P-loop containing nucleotide triphosphate hydrolases"/>
    <property type="match status" value="1"/>
</dbReference>
<dbReference type="HAMAP" id="MF_00328">
    <property type="entry name" value="Guanylate_kinase"/>
    <property type="match status" value="1"/>
</dbReference>
<dbReference type="InterPro" id="IPR008145">
    <property type="entry name" value="GK/Ca_channel_bsu"/>
</dbReference>
<dbReference type="InterPro" id="IPR008144">
    <property type="entry name" value="Guanylate_kin-like_dom"/>
</dbReference>
<dbReference type="InterPro" id="IPR017665">
    <property type="entry name" value="Guanylate_kinase"/>
</dbReference>
<dbReference type="InterPro" id="IPR020590">
    <property type="entry name" value="Guanylate_kinase_CS"/>
</dbReference>
<dbReference type="InterPro" id="IPR027417">
    <property type="entry name" value="P-loop_NTPase"/>
</dbReference>
<dbReference type="NCBIfam" id="TIGR03263">
    <property type="entry name" value="guanyl_kin"/>
    <property type="match status" value="1"/>
</dbReference>
<dbReference type="PANTHER" id="PTHR23117:SF13">
    <property type="entry name" value="GUANYLATE KINASE"/>
    <property type="match status" value="1"/>
</dbReference>
<dbReference type="PANTHER" id="PTHR23117">
    <property type="entry name" value="GUANYLATE KINASE-RELATED"/>
    <property type="match status" value="1"/>
</dbReference>
<dbReference type="Pfam" id="PF00625">
    <property type="entry name" value="Guanylate_kin"/>
    <property type="match status" value="1"/>
</dbReference>
<dbReference type="SMART" id="SM00072">
    <property type="entry name" value="GuKc"/>
    <property type="match status" value="1"/>
</dbReference>
<dbReference type="SUPFAM" id="SSF52540">
    <property type="entry name" value="P-loop containing nucleoside triphosphate hydrolases"/>
    <property type="match status" value="1"/>
</dbReference>
<dbReference type="PROSITE" id="PS00856">
    <property type="entry name" value="GUANYLATE_KINASE_1"/>
    <property type="match status" value="1"/>
</dbReference>
<dbReference type="PROSITE" id="PS50052">
    <property type="entry name" value="GUANYLATE_KINASE_2"/>
    <property type="match status" value="1"/>
</dbReference>
<reference key="1">
    <citation type="journal article" date="2005" name="J. Bacteriol.">
        <title>Whole-genome sequencing of Staphylococcus haemolyticus uncovers the extreme plasticity of its genome and the evolution of human-colonizing staphylococcal species.</title>
        <authorList>
            <person name="Takeuchi F."/>
            <person name="Watanabe S."/>
            <person name="Baba T."/>
            <person name="Yuzawa H."/>
            <person name="Ito T."/>
            <person name="Morimoto Y."/>
            <person name="Kuroda M."/>
            <person name="Cui L."/>
            <person name="Takahashi M."/>
            <person name="Ankai A."/>
            <person name="Baba S."/>
            <person name="Fukui S."/>
            <person name="Lee J.C."/>
            <person name="Hiramatsu K."/>
        </authorList>
    </citation>
    <scope>NUCLEOTIDE SEQUENCE [LARGE SCALE GENOMIC DNA]</scope>
    <source>
        <strain>JCSC1435</strain>
    </source>
</reference>
<proteinExistence type="inferred from homology"/>
<comment type="function">
    <text evidence="1">Essential for recycling GMP and indirectly, cGMP.</text>
</comment>
<comment type="catalytic activity">
    <reaction evidence="1">
        <text>GMP + ATP = GDP + ADP</text>
        <dbReference type="Rhea" id="RHEA:20780"/>
        <dbReference type="ChEBI" id="CHEBI:30616"/>
        <dbReference type="ChEBI" id="CHEBI:58115"/>
        <dbReference type="ChEBI" id="CHEBI:58189"/>
        <dbReference type="ChEBI" id="CHEBI:456216"/>
        <dbReference type="EC" id="2.7.4.8"/>
    </reaction>
</comment>
<comment type="subcellular location">
    <subcellularLocation>
        <location evidence="1">Cytoplasm</location>
    </subcellularLocation>
</comment>
<comment type="similarity">
    <text evidence="1">Belongs to the guanylate kinase family.</text>
</comment>
<accession>Q4L5R1</accession>
<organism>
    <name type="scientific">Staphylococcus haemolyticus (strain JCSC1435)</name>
    <dbReference type="NCBI Taxonomy" id="279808"/>
    <lineage>
        <taxon>Bacteria</taxon>
        <taxon>Bacillati</taxon>
        <taxon>Bacillota</taxon>
        <taxon>Bacilli</taxon>
        <taxon>Bacillales</taxon>
        <taxon>Staphylococcaceae</taxon>
        <taxon>Staphylococcus</taxon>
    </lineage>
</organism>
<keyword id="KW-0067">ATP-binding</keyword>
<keyword id="KW-0963">Cytoplasm</keyword>
<keyword id="KW-0418">Kinase</keyword>
<keyword id="KW-0547">Nucleotide-binding</keyword>
<keyword id="KW-0808">Transferase</keyword>